<dbReference type="EC" id="3.1.26.-"/>
<dbReference type="EC" id="3.6.4.-"/>
<dbReference type="EMBL" id="BA000050">
    <property type="protein sequence ID" value="BAE56740.1"/>
    <property type="molecule type" value="Genomic_DNA"/>
</dbReference>
<dbReference type="RefSeq" id="XP_001818742.1">
    <property type="nucleotide sequence ID" value="XM_001818690.1"/>
</dbReference>
<dbReference type="SMR" id="Q2UNX5"/>
<dbReference type="STRING" id="510516.Q2UNX5"/>
<dbReference type="EnsemblFungi" id="BAE56740">
    <property type="protein sequence ID" value="BAE56740"/>
    <property type="gene ID" value="AO090001000193"/>
</dbReference>
<dbReference type="GeneID" id="5990713"/>
<dbReference type="KEGG" id="aor:AO090001000193"/>
<dbReference type="VEuPathDB" id="FungiDB:AO090001000193"/>
<dbReference type="HOGENOM" id="CLU_000907_4_6_1"/>
<dbReference type="OMA" id="HFCAVIP"/>
<dbReference type="OrthoDB" id="106824at5052"/>
<dbReference type="Proteomes" id="UP000006564">
    <property type="component" value="Chromosome 2"/>
</dbReference>
<dbReference type="GO" id="GO:0005737">
    <property type="term" value="C:cytoplasm"/>
    <property type="evidence" value="ECO:0007669"/>
    <property type="project" value="TreeGrafter"/>
</dbReference>
<dbReference type="GO" id="GO:0005634">
    <property type="term" value="C:nucleus"/>
    <property type="evidence" value="ECO:0007669"/>
    <property type="project" value="TreeGrafter"/>
</dbReference>
<dbReference type="GO" id="GO:0005524">
    <property type="term" value="F:ATP binding"/>
    <property type="evidence" value="ECO:0007669"/>
    <property type="project" value="UniProtKB-KW"/>
</dbReference>
<dbReference type="GO" id="GO:0004386">
    <property type="term" value="F:helicase activity"/>
    <property type="evidence" value="ECO:0007669"/>
    <property type="project" value="UniProtKB-KW"/>
</dbReference>
<dbReference type="GO" id="GO:0046872">
    <property type="term" value="F:metal ion binding"/>
    <property type="evidence" value="ECO:0007669"/>
    <property type="project" value="UniProtKB-KW"/>
</dbReference>
<dbReference type="GO" id="GO:0004525">
    <property type="term" value="F:ribonuclease III activity"/>
    <property type="evidence" value="ECO:0007669"/>
    <property type="project" value="InterPro"/>
</dbReference>
<dbReference type="GO" id="GO:0003723">
    <property type="term" value="F:RNA binding"/>
    <property type="evidence" value="ECO:0007669"/>
    <property type="project" value="UniProtKB-KW"/>
</dbReference>
<dbReference type="GO" id="GO:0051607">
    <property type="term" value="P:defense response to virus"/>
    <property type="evidence" value="ECO:0007669"/>
    <property type="project" value="UniProtKB-KW"/>
</dbReference>
<dbReference type="GO" id="GO:0050688">
    <property type="term" value="P:regulation of defense response to virus"/>
    <property type="evidence" value="ECO:0007669"/>
    <property type="project" value="UniProtKB-KW"/>
</dbReference>
<dbReference type="GO" id="GO:0030422">
    <property type="term" value="P:siRNA processing"/>
    <property type="evidence" value="ECO:0007669"/>
    <property type="project" value="TreeGrafter"/>
</dbReference>
<dbReference type="CDD" id="cd18034">
    <property type="entry name" value="DEXHc_dicer"/>
    <property type="match status" value="1"/>
</dbReference>
<dbReference type="CDD" id="cd00593">
    <property type="entry name" value="RIBOc"/>
    <property type="match status" value="2"/>
</dbReference>
<dbReference type="CDD" id="cd18802">
    <property type="entry name" value="SF2_C_dicer"/>
    <property type="match status" value="1"/>
</dbReference>
<dbReference type="FunFam" id="3.40.50.300:FF:001669">
    <property type="entry name" value="Dicer-like protein 1"/>
    <property type="match status" value="1"/>
</dbReference>
<dbReference type="FunFam" id="1.10.1520.10:FF:000032">
    <property type="entry name" value="Dicer-like protein 2"/>
    <property type="match status" value="1"/>
</dbReference>
<dbReference type="Gene3D" id="3.30.160.380">
    <property type="entry name" value="Dicer dimerisation domain"/>
    <property type="match status" value="1"/>
</dbReference>
<dbReference type="Gene3D" id="3.40.50.300">
    <property type="entry name" value="P-loop containing nucleotide triphosphate hydrolases"/>
    <property type="match status" value="2"/>
</dbReference>
<dbReference type="Gene3D" id="1.10.1520.10">
    <property type="entry name" value="Ribonuclease III domain"/>
    <property type="match status" value="2"/>
</dbReference>
<dbReference type="InterPro" id="IPR011545">
    <property type="entry name" value="DEAD/DEAH_box_helicase_dom"/>
</dbReference>
<dbReference type="InterPro" id="IPR038248">
    <property type="entry name" value="Dicer_dimer_sf"/>
</dbReference>
<dbReference type="InterPro" id="IPR005034">
    <property type="entry name" value="Dicer_dimerisation_dom"/>
</dbReference>
<dbReference type="InterPro" id="IPR014001">
    <property type="entry name" value="Helicase_ATP-bd"/>
</dbReference>
<dbReference type="InterPro" id="IPR001650">
    <property type="entry name" value="Helicase_C-like"/>
</dbReference>
<dbReference type="InterPro" id="IPR027417">
    <property type="entry name" value="P-loop_NTPase"/>
</dbReference>
<dbReference type="InterPro" id="IPR000999">
    <property type="entry name" value="RNase_III_dom"/>
</dbReference>
<dbReference type="InterPro" id="IPR036389">
    <property type="entry name" value="RNase_III_sf"/>
</dbReference>
<dbReference type="PANTHER" id="PTHR14950">
    <property type="entry name" value="DICER-RELATED"/>
    <property type="match status" value="1"/>
</dbReference>
<dbReference type="PANTHER" id="PTHR14950:SF37">
    <property type="entry name" value="ENDORIBONUCLEASE DICER"/>
    <property type="match status" value="1"/>
</dbReference>
<dbReference type="Pfam" id="PF00270">
    <property type="entry name" value="DEAD"/>
    <property type="match status" value="1"/>
</dbReference>
<dbReference type="Pfam" id="PF03368">
    <property type="entry name" value="Dicer_dimer"/>
    <property type="match status" value="1"/>
</dbReference>
<dbReference type="Pfam" id="PF00271">
    <property type="entry name" value="Helicase_C"/>
    <property type="match status" value="1"/>
</dbReference>
<dbReference type="Pfam" id="PF00636">
    <property type="entry name" value="Ribonuclease_3"/>
    <property type="match status" value="2"/>
</dbReference>
<dbReference type="SMART" id="SM00487">
    <property type="entry name" value="DEXDc"/>
    <property type="match status" value="1"/>
</dbReference>
<dbReference type="SMART" id="SM00490">
    <property type="entry name" value="HELICc"/>
    <property type="match status" value="1"/>
</dbReference>
<dbReference type="SMART" id="SM00535">
    <property type="entry name" value="RIBOc"/>
    <property type="match status" value="2"/>
</dbReference>
<dbReference type="SUPFAM" id="SSF52540">
    <property type="entry name" value="P-loop containing nucleoside triphosphate hydrolases"/>
    <property type="match status" value="1"/>
</dbReference>
<dbReference type="SUPFAM" id="SSF69065">
    <property type="entry name" value="RNase III domain-like"/>
    <property type="match status" value="2"/>
</dbReference>
<dbReference type="PROSITE" id="PS51327">
    <property type="entry name" value="DICER_DSRBF"/>
    <property type="match status" value="1"/>
</dbReference>
<dbReference type="PROSITE" id="PS51192">
    <property type="entry name" value="HELICASE_ATP_BIND_1"/>
    <property type="match status" value="1"/>
</dbReference>
<dbReference type="PROSITE" id="PS51194">
    <property type="entry name" value="HELICASE_CTER"/>
    <property type="match status" value="1"/>
</dbReference>
<dbReference type="PROSITE" id="PS00517">
    <property type="entry name" value="RNASE_3_1"/>
    <property type="match status" value="1"/>
</dbReference>
<dbReference type="PROSITE" id="PS50142">
    <property type="entry name" value="RNASE_3_2"/>
    <property type="match status" value="2"/>
</dbReference>
<protein>
    <recommendedName>
        <fullName>Dicer-like protein 2</fullName>
    </recommendedName>
    <domain>
        <recommendedName>
            <fullName>Endoribonuclease dcl2</fullName>
            <ecNumber>3.1.26.-</ecNumber>
        </recommendedName>
    </domain>
    <domain>
        <recommendedName>
            <fullName>ATP-dependent helicase dcl2</fullName>
            <ecNumber>3.6.4.-</ecNumber>
        </recommendedName>
    </domain>
</protein>
<organism>
    <name type="scientific">Aspergillus oryzae (strain ATCC 42149 / RIB 40)</name>
    <name type="common">Yellow koji mold</name>
    <dbReference type="NCBI Taxonomy" id="510516"/>
    <lineage>
        <taxon>Eukaryota</taxon>
        <taxon>Fungi</taxon>
        <taxon>Dikarya</taxon>
        <taxon>Ascomycota</taxon>
        <taxon>Pezizomycotina</taxon>
        <taxon>Eurotiomycetes</taxon>
        <taxon>Eurotiomycetidae</taxon>
        <taxon>Eurotiales</taxon>
        <taxon>Aspergillaceae</taxon>
        <taxon>Aspergillus</taxon>
        <taxon>Aspergillus subgen. Circumdati</taxon>
    </lineage>
</organism>
<feature type="chain" id="PRO_0000306789" description="Dicer-like protein 2">
    <location>
        <begin position="1"/>
        <end position="1377"/>
    </location>
</feature>
<feature type="domain" description="Helicase ATP-binding" evidence="3">
    <location>
        <begin position="23"/>
        <end position="203"/>
    </location>
</feature>
<feature type="domain" description="Helicase C-terminal" evidence="4">
    <location>
        <begin position="368"/>
        <end position="531"/>
    </location>
</feature>
<feature type="domain" description="Dicer dsRNA-binding fold" evidence="5">
    <location>
        <begin position="561"/>
        <end position="655"/>
    </location>
</feature>
<feature type="domain" description="RNase III 1" evidence="2">
    <location>
        <begin position="914"/>
        <end position="1052"/>
    </location>
</feature>
<feature type="domain" description="RNase III 2" evidence="2">
    <location>
        <begin position="1092"/>
        <end position="1275"/>
    </location>
</feature>
<feature type="short sequence motif" description="DEAH box">
    <location>
        <begin position="144"/>
        <end position="147"/>
    </location>
</feature>
<feature type="binding site" evidence="3">
    <location>
        <begin position="36"/>
        <end position="43"/>
    </location>
    <ligand>
        <name>ATP</name>
        <dbReference type="ChEBI" id="CHEBI:30616"/>
    </ligand>
</feature>
<feature type="binding site" evidence="1">
    <location>
        <position position="1131"/>
    </location>
    <ligand>
        <name>Mg(2+)</name>
        <dbReference type="ChEBI" id="CHEBI:18420"/>
    </ligand>
</feature>
<feature type="binding site" evidence="1">
    <location>
        <position position="1261"/>
    </location>
    <ligand>
        <name>Mg(2+)</name>
        <dbReference type="ChEBI" id="CHEBI:18420"/>
    </ligand>
</feature>
<feature type="binding site" evidence="1">
    <location>
        <position position="1264"/>
    </location>
    <ligand>
        <name>Mg(2+)</name>
        <dbReference type="ChEBI" id="CHEBI:18420"/>
    </ligand>
</feature>
<feature type="site" description="Important for activity" evidence="1">
    <location>
        <position position="1257"/>
    </location>
</feature>
<sequence length="1377" mass="155787">MAQLNGSNGTGLLYKPRQYQYEMFEASLKENIIVAMDTGTGKTQIALLRIAHQLEGGGPRKLTWFLTPTVALCLQQYEVIRSHLPAVRACTITGLDKVERWKSQYIWDELLKDKQVVVSTHAVLFEALTHGFVRISQLGLLIFDEAHHCMRRHPANMIMLDFYHPTLRKHGRDSVPCILGLTASPVVRSKSQEMKTLESNLDSICKTPQVHKQELTTYAHRPELLPIICKAIDEGPGGRALQALEHAWDTADIDGDPDAIPQNGSLLNGSGEYKALMVRKTLCNEQIKRFVDRSRHIFAELGEWAADYYICTSVEQLRTTIRDQSLTMDWEDEERAYLSNFLSKLPVAEVQANLADPNNFTMSPKLAALINFLDKFDDPEFSGLIFVKQRVTVSVLARLLSLHPQTRDRFRCAAYVGMSVGSCRQDMVGDWHNAKKQRGTMDDFRSGRKNLIVTTSVLEEGIDVTACRVVVCFDKPANLKSFIQRRGRARQQKSTYAIMFSTADEHGDLRRWQILEQAMVEAYQDEERRLREAEAQEAVDENVPEMITVEATGAVITPDSVVTHLYHFCAVLPEERYVDNRPEFSFEKDRQGLIKGTVILPSCVHPKVRRIQGKLWWKSERAAVKETAFQAYRALYEFGLLNDHLLPLTKNPEMRPTDHTTLPSLLDVSEQYDPWTDWANSWSCPDVHQMRIALESNGHPADGLIMKLIGPTNLPPLAPITLFWDRDTRLTLSFDVPERITTVTDNCIANMRTVTALYIQAPRSRNLLNNDDFVTLFGPDLPSTELADWLLRNAGYETAHEAYSRGTMPGAMGIIRDLSRYDEPFFCHRWIESETGLIEIECRPIPRRRNFLHPPALDNGQADAIVESEHGSAKVHMVAAESCTVDKLPVSTAIFGLFIPHIVDRLESTLIANRLCATILCDVGFADIQHVITAIMAPSAQGVTNYQRYEFLGDSILKYIVSCQLFFQNLNWPEGFLTEGRTTIVQNPRLTRAALDAGLDSFIITKALTPRRWIAPLISTRVGAAPVKRQMSAKVLADVIEALIGAAYLDGGHSKAQICTHCFLPEVNRQPLDIPSLITQTEHGRTARHIIDGDLQRHLGYTFKNEDLLIEALTHPSCQHDQTTQSYQRLEFLGDAILDMVIVPIIFQYSNKISPGDMTLIKHAVVNANLLGFFCMEFSIEQDKTKVEKTPDGRFAVKSETQHVELWRFMRFNSLDLQTSRDAALDRHRRLRNKILTSLYHGPSYPWQSLSQLYADKFFSDIVESVLGAIYVDSGGDLSACERFLEQIGLLSYVRRVLLDGINVTHPRNIAQRLSKGDALFNLRRVSDEKGRSMYRCTVTMNDAQIVLVEGCQCGEEAEVRAANETIEFLQRRQEVV</sequence>
<proteinExistence type="inferred from homology"/>
<keyword id="KW-0051">Antiviral defense</keyword>
<keyword id="KW-0930">Antiviral protein</keyword>
<keyword id="KW-0067">ATP-binding</keyword>
<keyword id="KW-0347">Helicase</keyword>
<keyword id="KW-0378">Hydrolase</keyword>
<keyword id="KW-0460">Magnesium</keyword>
<keyword id="KW-0464">Manganese</keyword>
<keyword id="KW-0479">Metal-binding</keyword>
<keyword id="KW-0547">Nucleotide-binding</keyword>
<keyword id="KW-1185">Reference proteome</keyword>
<keyword id="KW-0677">Repeat</keyword>
<keyword id="KW-0694">RNA-binding</keyword>
<evidence type="ECO:0000250" key="1"/>
<evidence type="ECO:0000255" key="2">
    <source>
        <dbReference type="PROSITE-ProRule" id="PRU00177"/>
    </source>
</evidence>
<evidence type="ECO:0000255" key="3">
    <source>
        <dbReference type="PROSITE-ProRule" id="PRU00541"/>
    </source>
</evidence>
<evidence type="ECO:0000255" key="4">
    <source>
        <dbReference type="PROSITE-ProRule" id="PRU00542"/>
    </source>
</evidence>
<evidence type="ECO:0000255" key="5">
    <source>
        <dbReference type="PROSITE-ProRule" id="PRU00657"/>
    </source>
</evidence>
<reference key="1">
    <citation type="journal article" date="2005" name="Nature">
        <title>Genome sequencing and analysis of Aspergillus oryzae.</title>
        <authorList>
            <person name="Machida M."/>
            <person name="Asai K."/>
            <person name="Sano M."/>
            <person name="Tanaka T."/>
            <person name="Kumagai T."/>
            <person name="Terai G."/>
            <person name="Kusumoto K."/>
            <person name="Arima T."/>
            <person name="Akita O."/>
            <person name="Kashiwagi Y."/>
            <person name="Abe K."/>
            <person name="Gomi K."/>
            <person name="Horiuchi H."/>
            <person name="Kitamoto K."/>
            <person name="Kobayashi T."/>
            <person name="Takeuchi M."/>
            <person name="Denning D.W."/>
            <person name="Galagan J.E."/>
            <person name="Nierman W.C."/>
            <person name="Yu J."/>
            <person name="Archer D.B."/>
            <person name="Bennett J.W."/>
            <person name="Bhatnagar D."/>
            <person name="Cleveland T.E."/>
            <person name="Fedorova N.D."/>
            <person name="Gotoh O."/>
            <person name="Horikawa H."/>
            <person name="Hosoyama A."/>
            <person name="Ichinomiya M."/>
            <person name="Igarashi R."/>
            <person name="Iwashita K."/>
            <person name="Juvvadi P.R."/>
            <person name="Kato M."/>
            <person name="Kato Y."/>
            <person name="Kin T."/>
            <person name="Kokubun A."/>
            <person name="Maeda H."/>
            <person name="Maeyama N."/>
            <person name="Maruyama J."/>
            <person name="Nagasaki H."/>
            <person name="Nakajima T."/>
            <person name="Oda K."/>
            <person name="Okada K."/>
            <person name="Paulsen I."/>
            <person name="Sakamoto K."/>
            <person name="Sawano T."/>
            <person name="Takahashi M."/>
            <person name="Takase K."/>
            <person name="Terabayashi Y."/>
            <person name="Wortman J.R."/>
            <person name="Yamada O."/>
            <person name="Yamagata Y."/>
            <person name="Anazawa H."/>
            <person name="Hata Y."/>
            <person name="Koide Y."/>
            <person name="Komori T."/>
            <person name="Koyama Y."/>
            <person name="Minetoki T."/>
            <person name="Suharnan S."/>
            <person name="Tanaka A."/>
            <person name="Isono K."/>
            <person name="Kuhara S."/>
            <person name="Ogasawara N."/>
            <person name="Kikuchi H."/>
        </authorList>
    </citation>
    <scope>NUCLEOTIDE SEQUENCE [LARGE SCALE GENOMIC DNA]</scope>
    <source>
        <strain>ATCC 42149 / RIB 40</strain>
    </source>
</reference>
<comment type="function">
    <text evidence="1">Dicer-like endonuclease involved in cleaving double-stranded RNA in the RNA interference (RNAi) pathway. Produces 21 to 25 bp dsRNAs (siRNAs) which target the selective destruction of homologous RNAs leading to sequence-specific suppression of gene expression, called post-transcriptional gene silencing (PTGS). Part of a broad host defense response against viral infection and transposons (By similarity).</text>
</comment>
<comment type="cofactor">
    <cofactor evidence="1">
        <name>Mg(2+)</name>
        <dbReference type="ChEBI" id="CHEBI:18420"/>
    </cofactor>
    <cofactor evidence="1">
        <name>Mn(2+)</name>
        <dbReference type="ChEBI" id="CHEBI:29035"/>
    </cofactor>
</comment>
<comment type="similarity">
    <text evidence="5">Belongs to the helicase family. Dicer subfamily.</text>
</comment>
<name>DCL2_ASPOR</name>
<accession>Q2UNX5</accession>
<gene>
    <name type="primary">dcl2</name>
    <name type="ORF">AO090001000193</name>
</gene>